<protein>
    <recommendedName>
        <fullName evidence="7">Facilitated glucose transporter protein 1</fullName>
    </recommendedName>
</protein>
<accession>O44827</accession>
<accession>H2L0B9</accession>
<reference evidence="8" key="1">
    <citation type="journal article" date="2013" name="Biochem. J.">
        <title>FGT-1 is the major glucose transporter in C. elegans and is central to aging pathways.</title>
        <authorList>
            <person name="Feng Y."/>
            <person name="Williams B.G."/>
            <person name="Koumanov F."/>
            <person name="Wolstenholme A.J."/>
            <person name="Holman G.D."/>
        </authorList>
    </citation>
    <scope>NUCLEOTIDE SEQUENCE [MRNA] (ISOFORMS A AND B)</scope>
    <scope>FUNCTION</scope>
    <scope>DISRUPTION PHENOTYPE</scope>
    <source>
        <strain evidence="5">Bristol N2</strain>
    </source>
</reference>
<reference evidence="8 9" key="2">
    <citation type="journal article" date="1998" name="Science">
        <title>Genome sequence of the nematode C. elegans: a platform for investigating biology.</title>
        <authorList>
            <consortium name="The C. elegans sequencing consortium"/>
        </authorList>
    </citation>
    <scope>NUCLEOTIDE SEQUENCE [LARGE SCALE GENOMIC DNA]</scope>
    <scope>ALTERNATIVE SPLICING</scope>
    <source>
        <strain evidence="9">Bristol N2</strain>
    </source>
</reference>
<reference evidence="8" key="3">
    <citation type="journal article" date="2013" name="PLoS ONE">
        <title>FGT-1 is a mammalian GLUT2-like facilitative glucose transporter in Caenorhabditis elegans whose malfunction induces fat accumulation in intestinal cells.</title>
        <authorList>
            <person name="Kitaoka S."/>
            <person name="Morielli A.D."/>
            <person name="Zhao F.Q."/>
        </authorList>
    </citation>
    <scope>FUNCTION</scope>
    <scope>BIOPHYSICOCHEMICAL PROPERTIES</scope>
    <scope>SUBCELLULAR LOCATION</scope>
    <scope>TISSUE SPECIFICITY</scope>
    <scope>DISRUPTION PHENOTYPE</scope>
</reference>
<comment type="function">
    <text evidence="4 5 6">Facilitative glucose transporter that plays a role in glucose metabolism and regulation of longevity. May also play a role in lipid metabolism. Glucose transport activity of isoform a is competitively inhibited by mannose, galactose and fructose, suggesting ability to transport also other hexose sugars.</text>
</comment>
<comment type="biophysicochemical properties">
    <kinetics>
        <KM evidence="4">2.8 mM for 2-deoxy-D-glucose (isoform a at pH 7.6)</KM>
    </kinetics>
</comment>
<comment type="subcellular location">
    <subcellularLocation>
        <location evidence="4 5">Cell membrane</location>
        <topology evidence="4 5">Multi-pass membrane protein</topology>
    </subcellularLocation>
</comment>
<comment type="subcellular location">
    <molecule>Isoform a</molecule>
    <subcellularLocation>
        <location evidence="4">Basolateral cell membrane</location>
        <topology evidence="4 5">Multi-pass membrane protein</topology>
    </subcellularLocation>
    <text evidence="4">Detected on the basolateral but not on the apicolateral membrane of intestinal cells.</text>
</comment>
<comment type="alternative products">
    <event type="alternative splicing"/>
    <isoform>
        <id>O44827-1</id>
        <name evidence="5">b</name>
        <name evidence="7">FGT-1B</name>
        <sequence type="displayed"/>
    </isoform>
    <isoform>
        <id>O44827-2</id>
        <name evidence="5">a</name>
        <name evidence="7">FGT-1A</name>
        <sequence type="described" ref="VSP_053583 VSP_053584"/>
    </isoform>
</comment>
<comment type="tissue specificity">
    <text evidence="4">Isoform a is expressed in pharyngeal muscle and intestinal cells in both embryos and adults (at protein level).</text>
</comment>
<comment type="disruption phenotype">
    <text evidence="4 5">RNAi-mediated knockdown of the protein causes reduced 2-deoxy-D-glucose uptake, glucose oxidation and glucose conversion to triglyceride; simultaneous knockout of daf-2 or age-1 causes further reductions. The lifespan in low glucose environment is extended by 20-25% after knockdown, with 7% extension in daf-2 mutant background and no significant extension in age-1 mutant background. Fat accumulation in intestinal cells is increased. Brood size and dauer formation are not affected.</text>
</comment>
<comment type="similarity">
    <text evidence="2">Belongs to the major facilitator superfamily. Sugar transporter (TC 2.A.1.1) family. Glucose transporter subfamily.</text>
</comment>
<gene>
    <name evidence="9 10" type="primary">fgt-1</name>
    <name type="ORF">H17B01.1</name>
</gene>
<dbReference type="EMBL" id="FO081553">
    <property type="protein sequence ID" value="CCD72383.1"/>
    <property type="molecule type" value="Genomic_DNA"/>
</dbReference>
<dbReference type="EMBL" id="FO081553">
    <property type="protein sequence ID" value="CCD72384.1"/>
    <property type="molecule type" value="Genomic_DNA"/>
</dbReference>
<dbReference type="RefSeq" id="NP_493981.1">
    <molecule id="O44827-2"/>
    <property type="nucleotide sequence ID" value="NM_061580.4"/>
</dbReference>
<dbReference type="RefSeq" id="NP_493982.1">
    <molecule id="O44827-1"/>
    <property type="nucleotide sequence ID" value="NM_061581.1"/>
</dbReference>
<dbReference type="SMR" id="O44827"/>
<dbReference type="BioGRID" id="38898">
    <property type="interactions" value="5"/>
</dbReference>
<dbReference type="FunCoup" id="O44827">
    <property type="interactions" value="560"/>
</dbReference>
<dbReference type="STRING" id="6239.H17B01.1b.1"/>
<dbReference type="PaxDb" id="6239-H17B01.1b"/>
<dbReference type="PeptideAtlas" id="O44827"/>
<dbReference type="EnsemblMetazoa" id="H17B01.1a.1">
    <molecule id="O44827-2"/>
    <property type="protein sequence ID" value="H17B01.1a.1"/>
    <property type="gene ID" value="WBGene00019207"/>
</dbReference>
<dbReference type="EnsemblMetazoa" id="H17B01.1b.1">
    <molecule id="O44827-1"/>
    <property type="protein sequence ID" value="H17B01.1b.1"/>
    <property type="gene ID" value="WBGene00019207"/>
</dbReference>
<dbReference type="KEGG" id="cel:CELE_H17B01.1"/>
<dbReference type="UCSC" id="H17B01.1a">
    <molecule id="O44827-1"/>
    <property type="organism name" value="c. elegans"/>
</dbReference>
<dbReference type="AGR" id="WB:WBGene00019207"/>
<dbReference type="CTD" id="173525"/>
<dbReference type="WormBase" id="H17B01.1a">
    <molecule id="O44827-2"/>
    <property type="protein sequence ID" value="CE27184"/>
    <property type="gene ID" value="WBGene00019207"/>
    <property type="gene designation" value="fgt-1"/>
</dbReference>
<dbReference type="WormBase" id="H17B01.1b">
    <molecule id="O44827-1"/>
    <property type="protein sequence ID" value="CE27185"/>
    <property type="gene ID" value="WBGene00019207"/>
    <property type="gene designation" value="fgt-1"/>
</dbReference>
<dbReference type="eggNOG" id="KOG0569">
    <property type="taxonomic scope" value="Eukaryota"/>
</dbReference>
<dbReference type="GeneTree" id="ENSGT00940000166877"/>
<dbReference type="InParanoid" id="O44827"/>
<dbReference type="OMA" id="VMVVFAC"/>
<dbReference type="OrthoDB" id="4540492at2759"/>
<dbReference type="PhylomeDB" id="O44827"/>
<dbReference type="Reactome" id="R-CEL-189200">
    <property type="pathway name" value="Cellular hexose transport"/>
</dbReference>
<dbReference type="Reactome" id="R-CEL-196836">
    <property type="pathway name" value="Vitamin C (ascorbate) metabolism"/>
</dbReference>
<dbReference type="Reactome" id="R-CEL-422356">
    <property type="pathway name" value="Regulation of insulin secretion"/>
</dbReference>
<dbReference type="Reactome" id="R-CEL-5653890">
    <property type="pathway name" value="Lactose synthesis"/>
</dbReference>
<dbReference type="Reactome" id="R-CEL-6798695">
    <property type="pathway name" value="Neutrophil degranulation"/>
</dbReference>
<dbReference type="Reactome" id="R-CEL-8981373">
    <property type="pathway name" value="Intestinal hexose absorption"/>
</dbReference>
<dbReference type="PRO" id="PR:O44827"/>
<dbReference type="Proteomes" id="UP000001940">
    <property type="component" value="Chromosome II"/>
</dbReference>
<dbReference type="Bgee" id="WBGene00019207">
    <property type="expression patterns" value="Expressed in pharyngeal muscle cell (C elegans) and 3 other cell types or tissues"/>
</dbReference>
<dbReference type="GO" id="GO:0016323">
    <property type="term" value="C:basolateral plasma membrane"/>
    <property type="evidence" value="ECO:0007669"/>
    <property type="project" value="UniProtKB-SubCell"/>
</dbReference>
<dbReference type="GO" id="GO:0016020">
    <property type="term" value="C:membrane"/>
    <property type="evidence" value="ECO:0000318"/>
    <property type="project" value="GO_Central"/>
</dbReference>
<dbReference type="GO" id="GO:0015149">
    <property type="term" value="F:hexose transmembrane transporter activity"/>
    <property type="evidence" value="ECO:0000318"/>
    <property type="project" value="GO_Central"/>
</dbReference>
<dbReference type="GO" id="GO:1904659">
    <property type="term" value="P:D-glucose transmembrane transport"/>
    <property type="evidence" value="ECO:0000314"/>
    <property type="project" value="WormBase"/>
</dbReference>
<dbReference type="GO" id="GO:0015749">
    <property type="term" value="P:monosaccharide transmembrane transport"/>
    <property type="evidence" value="ECO:0000318"/>
    <property type="project" value="GO_Central"/>
</dbReference>
<dbReference type="CDD" id="cd17431">
    <property type="entry name" value="MFS_GLUT_Class1"/>
    <property type="match status" value="1"/>
</dbReference>
<dbReference type="FunFam" id="1.20.1250.20:FF:000029">
    <property type="entry name" value="solute carrier family 2, facilitated glucose transporter member 4"/>
    <property type="match status" value="1"/>
</dbReference>
<dbReference type="Gene3D" id="1.20.1250.20">
    <property type="entry name" value="MFS general substrate transporter like domains"/>
    <property type="match status" value="1"/>
</dbReference>
<dbReference type="InterPro" id="IPR045263">
    <property type="entry name" value="GLUT"/>
</dbReference>
<dbReference type="InterPro" id="IPR020846">
    <property type="entry name" value="MFS_dom"/>
</dbReference>
<dbReference type="InterPro" id="IPR005828">
    <property type="entry name" value="MFS_sugar_transport-like"/>
</dbReference>
<dbReference type="InterPro" id="IPR036259">
    <property type="entry name" value="MFS_trans_sf"/>
</dbReference>
<dbReference type="InterPro" id="IPR003663">
    <property type="entry name" value="Sugar/inositol_transpt"/>
</dbReference>
<dbReference type="InterPro" id="IPR005829">
    <property type="entry name" value="Sugar_transporter_CS"/>
</dbReference>
<dbReference type="NCBIfam" id="TIGR00879">
    <property type="entry name" value="SP"/>
    <property type="match status" value="1"/>
</dbReference>
<dbReference type="PANTHER" id="PTHR23503:SF8">
    <property type="entry name" value="FACILITATED GLUCOSE TRANSPORTER PROTEIN 1"/>
    <property type="match status" value="1"/>
</dbReference>
<dbReference type="PANTHER" id="PTHR23503">
    <property type="entry name" value="SOLUTE CARRIER FAMILY 2"/>
    <property type="match status" value="1"/>
</dbReference>
<dbReference type="Pfam" id="PF00083">
    <property type="entry name" value="Sugar_tr"/>
    <property type="match status" value="1"/>
</dbReference>
<dbReference type="PRINTS" id="PR00171">
    <property type="entry name" value="SUGRTRNSPORT"/>
</dbReference>
<dbReference type="SUPFAM" id="SSF103473">
    <property type="entry name" value="MFS general substrate transporter"/>
    <property type="match status" value="1"/>
</dbReference>
<dbReference type="PROSITE" id="PS50850">
    <property type="entry name" value="MFS"/>
    <property type="match status" value="1"/>
</dbReference>
<dbReference type="PROSITE" id="PS00217">
    <property type="entry name" value="SUGAR_TRANSPORT_2"/>
    <property type="match status" value="1"/>
</dbReference>
<keyword id="KW-0025">Alternative splicing</keyword>
<keyword id="KW-1003">Cell membrane</keyword>
<keyword id="KW-0472">Membrane</keyword>
<keyword id="KW-1185">Reference proteome</keyword>
<keyword id="KW-0762">Sugar transport</keyword>
<keyword id="KW-0812">Transmembrane</keyword>
<keyword id="KW-1133">Transmembrane helix</keyword>
<keyword id="KW-0813">Transport</keyword>
<feature type="chain" id="PRO_0000425146" description="Facilitated glucose transporter protein 1">
    <location>
        <begin position="1"/>
        <end position="510"/>
    </location>
</feature>
<feature type="topological domain" description="Cytoplasmic" evidence="2">
    <location>
        <begin position="1"/>
        <end position="46"/>
    </location>
</feature>
<feature type="transmembrane region" description="Helical; Name=1" evidence="2">
    <location>
        <begin position="47"/>
        <end position="67"/>
    </location>
</feature>
<feature type="topological domain" description="Extracellular" evidence="2">
    <location>
        <begin position="68"/>
        <end position="100"/>
    </location>
</feature>
<feature type="transmembrane region" description="Helical; Name=2" evidence="2">
    <location>
        <begin position="101"/>
        <end position="121"/>
    </location>
</feature>
<feature type="topological domain" description="Cytoplasmic" evidence="2">
    <location>
        <begin position="122"/>
        <end position="127"/>
    </location>
</feature>
<feature type="transmembrane region" description="Helical; Name=3" evidence="2">
    <location>
        <begin position="128"/>
        <end position="146"/>
    </location>
</feature>
<feature type="topological domain" description="Extracellular" evidence="2">
    <location>
        <begin position="147"/>
        <end position="160"/>
    </location>
</feature>
<feature type="transmembrane region" description="Helical; Name=4" evidence="2">
    <location>
        <begin position="161"/>
        <end position="181"/>
    </location>
</feature>
<feature type="topological domain" description="Cytoplasmic" evidence="2">
    <location>
        <begin position="182"/>
        <end position="195"/>
    </location>
</feature>
<feature type="transmembrane region" description="Helical; Name=5" evidence="2">
    <location>
        <begin position="196"/>
        <end position="216"/>
    </location>
</feature>
<feature type="topological domain" description="Extracellular" evidence="2">
    <location>
        <begin position="217"/>
        <end position="219"/>
    </location>
</feature>
<feature type="transmembrane region" description="Helical; Name=6" evidence="2">
    <location>
        <begin position="220"/>
        <end position="240"/>
    </location>
</feature>
<feature type="topological domain" description="Cytoplasmic" evidence="2">
    <location>
        <begin position="241"/>
        <end position="299"/>
    </location>
</feature>
<feature type="transmembrane region" description="Helical; Name=7" evidence="2">
    <location>
        <begin position="300"/>
        <end position="320"/>
    </location>
</feature>
<feature type="topological domain" description="Extracellular" evidence="2">
    <location>
        <begin position="321"/>
        <end position="341"/>
    </location>
</feature>
<feature type="transmembrane region" description="Helical; Name=8" evidence="2">
    <location>
        <begin position="342"/>
        <end position="362"/>
    </location>
</feature>
<feature type="topological domain" description="Cytoplasmic" evidence="2">
    <location>
        <begin position="363"/>
        <end position="373"/>
    </location>
</feature>
<feature type="transmembrane region" description="Helical; Name=9" evidence="2">
    <location>
        <begin position="374"/>
        <end position="394"/>
    </location>
</feature>
<feature type="topological domain" description="Extracellular" evidence="2">
    <location>
        <begin position="395"/>
        <end position="409"/>
    </location>
</feature>
<feature type="transmembrane region" description="Helical; Name=10" evidence="2">
    <location>
        <begin position="410"/>
        <end position="430"/>
    </location>
</feature>
<feature type="topological domain" description="Cytoplasmic" evidence="2">
    <location>
        <begin position="431"/>
        <end position="445"/>
    </location>
</feature>
<feature type="transmembrane region" description="Helical; Name=11" evidence="2">
    <location>
        <begin position="446"/>
        <end position="464"/>
    </location>
</feature>
<feature type="topological domain" description="Extracellular" evidence="2">
    <location>
        <begin position="465"/>
        <end position="470"/>
    </location>
</feature>
<feature type="transmembrane region" description="Helical; Name=12" evidence="2">
    <location>
        <begin position="471"/>
        <end position="491"/>
    </location>
</feature>
<feature type="topological domain" description="Cytoplasmic" evidence="2">
    <location>
        <begin position="492"/>
        <end position="510"/>
    </location>
</feature>
<feature type="region of interest" description="Disordered" evidence="3">
    <location>
        <begin position="1"/>
        <end position="29"/>
    </location>
</feature>
<feature type="compositionally biased region" description="Low complexity" evidence="3">
    <location>
        <begin position="8"/>
        <end position="29"/>
    </location>
</feature>
<feature type="binding site" evidence="1">
    <location>
        <position position="195"/>
    </location>
    <ligand>
        <name>D-glucose</name>
        <dbReference type="ChEBI" id="CHEBI:4167"/>
    </ligand>
</feature>
<feature type="binding site" evidence="1">
    <location>
        <begin position="315"/>
        <end position="316"/>
    </location>
    <ligand>
        <name>D-glucose</name>
        <dbReference type="ChEBI" id="CHEBI:4167"/>
    </ligand>
</feature>
<feature type="binding site" evidence="1">
    <location>
        <position position="321"/>
    </location>
    <ligand>
        <name>D-glucose</name>
        <dbReference type="ChEBI" id="CHEBI:4167"/>
    </ligand>
</feature>
<feature type="binding site" evidence="1">
    <location>
        <position position="352"/>
    </location>
    <ligand>
        <name>D-glucose</name>
        <dbReference type="ChEBI" id="CHEBI:4167"/>
    </ligand>
</feature>
<feature type="binding site" evidence="1">
    <location>
        <position position="427"/>
    </location>
    <ligand>
        <name>D-glucose</name>
        <dbReference type="ChEBI" id="CHEBI:4167"/>
    </ligand>
</feature>
<feature type="splice variant" id="VSP_053583" description="In isoform a." evidence="7">
    <location>
        <begin position="1"/>
        <end position="18"/>
    </location>
</feature>
<feature type="splice variant" id="VSP_053584" description="In isoform a." evidence="7">
    <original>SKSPSSYSTPGTTTQKIIFPD</original>
    <variation>MGVNDHDVSVPLQEVQSRTVE</variation>
    <location>
        <begin position="19"/>
        <end position="39"/>
    </location>
</feature>
<organism>
    <name type="scientific">Caenorhabditis elegans</name>
    <dbReference type="NCBI Taxonomy" id="6239"/>
    <lineage>
        <taxon>Eukaryota</taxon>
        <taxon>Metazoa</taxon>
        <taxon>Ecdysozoa</taxon>
        <taxon>Nematoda</taxon>
        <taxon>Chromadorea</taxon>
        <taxon>Rhabditida</taxon>
        <taxon>Rhabditina</taxon>
        <taxon>Rhabditomorpha</taxon>
        <taxon>Rhabditoidea</taxon>
        <taxon>Rhabditidae</taxon>
        <taxon>Peloderinae</taxon>
        <taxon>Caenorhabditis</taxon>
    </lineage>
</organism>
<proteinExistence type="evidence at protein level"/>
<evidence type="ECO:0000250" key="1">
    <source>
        <dbReference type="UniProtKB" id="P11169"/>
    </source>
</evidence>
<evidence type="ECO:0000255" key="2"/>
<evidence type="ECO:0000256" key="3">
    <source>
        <dbReference type="SAM" id="MobiDB-lite"/>
    </source>
</evidence>
<evidence type="ECO:0000269" key="4">
    <source>
    </source>
</evidence>
<evidence type="ECO:0000269" key="5">
    <source>
    </source>
</evidence>
<evidence type="ECO:0000303" key="6">
    <source>
    </source>
</evidence>
<evidence type="ECO:0000303" key="7">
    <source>
    </source>
</evidence>
<evidence type="ECO:0000305" key="8"/>
<evidence type="ECO:0000312" key="9">
    <source>
        <dbReference type="EMBL" id="CCD72384.1"/>
    </source>
</evidence>
<evidence type="ECO:0000312" key="10">
    <source>
        <dbReference type="WormBase" id="H17B01.1b"/>
    </source>
</evidence>
<sequence length="510" mass="55068">MSEKSRSDTSATASLSDSSKSPSSYSTPGTTTQKIIFPDGKLTKCLAFSAFVITLASFQFGYHIGCVNAPGGLITEWIIGSHKDLFDKELSRENADLAWSVAVSVFAVGGMIGGLSSGWLADKVGRRGALFYNNLLALAAAALMGLAKSVGAYPMVILGRLIIGLNCGFSSALVPMFLTEISPNNLRGMLGSLHQLLVTIAILVSQIFGLPHLLGTGDRWPLIFAFTVVPAVLQLALLMLCPESPKYTMAVRGQRNEAESALKKLRDTEDVSTEIEAMQEEATAAGVQEKPKMGDMFKGALLWPMSIAIMMMLAQQLSGINVAMFYSTVIFRGAGLTGNEPFYATIGMGAVNVIMTLISVWLVDHPKFGRRSLLLAGLTGMFVSTLLLVGALTIQNSGGDKWASYSAIGFVLLFVISFATGPGAIPWFFVSEIFDSSARGNANSIAVMVNWAANLLVGLTFLPINNLMQQYSFFIFSGFLAFFIFYTWKFVPETKGKSIEQIQAEFEKRK</sequence>
<name>FGT1_CAEEL</name>